<feature type="chain" id="PRO_1000120295" description="GMP synthase [glutamine-hydrolyzing]">
    <location>
        <begin position="1"/>
        <end position="525"/>
    </location>
</feature>
<feature type="domain" description="Glutamine amidotransferase type-1" evidence="1">
    <location>
        <begin position="9"/>
        <end position="207"/>
    </location>
</feature>
<feature type="domain" description="GMPS ATP-PPase" evidence="1">
    <location>
        <begin position="208"/>
        <end position="400"/>
    </location>
</feature>
<feature type="active site" description="Nucleophile" evidence="1">
    <location>
        <position position="86"/>
    </location>
</feature>
<feature type="active site" evidence="1">
    <location>
        <position position="181"/>
    </location>
</feature>
<feature type="active site" evidence="1">
    <location>
        <position position="183"/>
    </location>
</feature>
<feature type="binding site" evidence="1">
    <location>
        <begin position="235"/>
        <end position="241"/>
    </location>
    <ligand>
        <name>ATP</name>
        <dbReference type="ChEBI" id="CHEBI:30616"/>
    </ligand>
</feature>
<dbReference type="EC" id="6.3.5.2" evidence="1"/>
<dbReference type="EMBL" id="CP000783">
    <property type="protein sequence ID" value="ABU76032.1"/>
    <property type="molecule type" value="Genomic_DNA"/>
</dbReference>
<dbReference type="RefSeq" id="WP_007897290.1">
    <property type="nucleotide sequence ID" value="NC_009778.1"/>
</dbReference>
<dbReference type="SMR" id="A7MGU1"/>
<dbReference type="GeneID" id="56729639"/>
<dbReference type="KEGG" id="esa:ESA_00755"/>
<dbReference type="HOGENOM" id="CLU_014340_0_5_6"/>
<dbReference type="UniPathway" id="UPA00189">
    <property type="reaction ID" value="UER00296"/>
</dbReference>
<dbReference type="Proteomes" id="UP000000260">
    <property type="component" value="Chromosome"/>
</dbReference>
<dbReference type="GO" id="GO:0005829">
    <property type="term" value="C:cytosol"/>
    <property type="evidence" value="ECO:0007669"/>
    <property type="project" value="TreeGrafter"/>
</dbReference>
<dbReference type="GO" id="GO:0005524">
    <property type="term" value="F:ATP binding"/>
    <property type="evidence" value="ECO:0007669"/>
    <property type="project" value="UniProtKB-UniRule"/>
</dbReference>
<dbReference type="GO" id="GO:0003921">
    <property type="term" value="F:GMP synthase activity"/>
    <property type="evidence" value="ECO:0007669"/>
    <property type="project" value="InterPro"/>
</dbReference>
<dbReference type="CDD" id="cd01742">
    <property type="entry name" value="GATase1_GMP_Synthase"/>
    <property type="match status" value="1"/>
</dbReference>
<dbReference type="CDD" id="cd01997">
    <property type="entry name" value="GMP_synthase_C"/>
    <property type="match status" value="1"/>
</dbReference>
<dbReference type="FunFam" id="3.30.300.10:FF:000002">
    <property type="entry name" value="GMP synthase [glutamine-hydrolyzing]"/>
    <property type="match status" value="1"/>
</dbReference>
<dbReference type="FunFam" id="3.40.50.620:FF:000001">
    <property type="entry name" value="GMP synthase [glutamine-hydrolyzing]"/>
    <property type="match status" value="1"/>
</dbReference>
<dbReference type="FunFam" id="3.40.50.880:FF:000001">
    <property type="entry name" value="GMP synthase [glutamine-hydrolyzing]"/>
    <property type="match status" value="1"/>
</dbReference>
<dbReference type="Gene3D" id="3.30.300.10">
    <property type="match status" value="1"/>
</dbReference>
<dbReference type="Gene3D" id="3.40.50.880">
    <property type="match status" value="1"/>
</dbReference>
<dbReference type="Gene3D" id="3.40.50.620">
    <property type="entry name" value="HUPs"/>
    <property type="match status" value="1"/>
</dbReference>
<dbReference type="HAMAP" id="MF_00344">
    <property type="entry name" value="GMP_synthase"/>
    <property type="match status" value="1"/>
</dbReference>
<dbReference type="InterPro" id="IPR029062">
    <property type="entry name" value="Class_I_gatase-like"/>
</dbReference>
<dbReference type="InterPro" id="IPR017926">
    <property type="entry name" value="GATASE"/>
</dbReference>
<dbReference type="InterPro" id="IPR001674">
    <property type="entry name" value="GMP_synth_C"/>
</dbReference>
<dbReference type="InterPro" id="IPR004739">
    <property type="entry name" value="GMP_synth_GATase"/>
</dbReference>
<dbReference type="InterPro" id="IPR022955">
    <property type="entry name" value="GMP_synthase"/>
</dbReference>
<dbReference type="InterPro" id="IPR025777">
    <property type="entry name" value="GMPS_ATP_PPase_dom"/>
</dbReference>
<dbReference type="InterPro" id="IPR022310">
    <property type="entry name" value="NAD/GMP_synthase"/>
</dbReference>
<dbReference type="InterPro" id="IPR014729">
    <property type="entry name" value="Rossmann-like_a/b/a_fold"/>
</dbReference>
<dbReference type="NCBIfam" id="TIGR00884">
    <property type="entry name" value="guaA_Cterm"/>
    <property type="match status" value="1"/>
</dbReference>
<dbReference type="NCBIfam" id="TIGR00888">
    <property type="entry name" value="guaA_Nterm"/>
    <property type="match status" value="1"/>
</dbReference>
<dbReference type="NCBIfam" id="NF000848">
    <property type="entry name" value="PRK00074.1"/>
    <property type="match status" value="1"/>
</dbReference>
<dbReference type="PANTHER" id="PTHR11922:SF2">
    <property type="entry name" value="GMP SYNTHASE [GLUTAMINE-HYDROLYZING]"/>
    <property type="match status" value="1"/>
</dbReference>
<dbReference type="PANTHER" id="PTHR11922">
    <property type="entry name" value="GMP SYNTHASE-RELATED"/>
    <property type="match status" value="1"/>
</dbReference>
<dbReference type="Pfam" id="PF00117">
    <property type="entry name" value="GATase"/>
    <property type="match status" value="1"/>
</dbReference>
<dbReference type="Pfam" id="PF00958">
    <property type="entry name" value="GMP_synt_C"/>
    <property type="match status" value="1"/>
</dbReference>
<dbReference type="Pfam" id="PF02540">
    <property type="entry name" value="NAD_synthase"/>
    <property type="match status" value="1"/>
</dbReference>
<dbReference type="PRINTS" id="PR00097">
    <property type="entry name" value="ANTSNTHASEII"/>
</dbReference>
<dbReference type="PRINTS" id="PR00099">
    <property type="entry name" value="CPSGATASE"/>
</dbReference>
<dbReference type="PRINTS" id="PR00096">
    <property type="entry name" value="GATASE"/>
</dbReference>
<dbReference type="SUPFAM" id="SSF52402">
    <property type="entry name" value="Adenine nucleotide alpha hydrolases-like"/>
    <property type="match status" value="1"/>
</dbReference>
<dbReference type="SUPFAM" id="SSF52317">
    <property type="entry name" value="Class I glutamine amidotransferase-like"/>
    <property type="match status" value="1"/>
</dbReference>
<dbReference type="SUPFAM" id="SSF54810">
    <property type="entry name" value="GMP synthetase C-terminal dimerisation domain"/>
    <property type="match status" value="1"/>
</dbReference>
<dbReference type="PROSITE" id="PS51273">
    <property type="entry name" value="GATASE_TYPE_1"/>
    <property type="match status" value="1"/>
</dbReference>
<dbReference type="PROSITE" id="PS51553">
    <property type="entry name" value="GMPS_ATP_PPASE"/>
    <property type="match status" value="1"/>
</dbReference>
<name>GUAA_CROS8</name>
<accession>A7MGU1</accession>
<comment type="function">
    <text evidence="1">Catalyzes the synthesis of GMP from XMP.</text>
</comment>
<comment type="catalytic activity">
    <reaction evidence="1">
        <text>XMP + L-glutamine + ATP + H2O = GMP + L-glutamate + AMP + diphosphate + 2 H(+)</text>
        <dbReference type="Rhea" id="RHEA:11680"/>
        <dbReference type="ChEBI" id="CHEBI:15377"/>
        <dbReference type="ChEBI" id="CHEBI:15378"/>
        <dbReference type="ChEBI" id="CHEBI:29985"/>
        <dbReference type="ChEBI" id="CHEBI:30616"/>
        <dbReference type="ChEBI" id="CHEBI:33019"/>
        <dbReference type="ChEBI" id="CHEBI:57464"/>
        <dbReference type="ChEBI" id="CHEBI:58115"/>
        <dbReference type="ChEBI" id="CHEBI:58359"/>
        <dbReference type="ChEBI" id="CHEBI:456215"/>
        <dbReference type="EC" id="6.3.5.2"/>
    </reaction>
</comment>
<comment type="pathway">
    <text evidence="1">Purine metabolism; GMP biosynthesis; GMP from XMP (L-Gln route): step 1/1.</text>
</comment>
<comment type="subunit">
    <text evidence="1">Homodimer.</text>
</comment>
<reference key="1">
    <citation type="journal article" date="2010" name="PLoS ONE">
        <title>Genome sequence of Cronobacter sakazakii BAA-894 and comparative genomic hybridization analysis with other Cronobacter species.</title>
        <authorList>
            <person name="Kucerova E."/>
            <person name="Clifton S.W."/>
            <person name="Xia X.Q."/>
            <person name="Long F."/>
            <person name="Porwollik S."/>
            <person name="Fulton L."/>
            <person name="Fronick C."/>
            <person name="Minx P."/>
            <person name="Kyung K."/>
            <person name="Warren W."/>
            <person name="Fulton R."/>
            <person name="Feng D."/>
            <person name="Wollam A."/>
            <person name="Shah N."/>
            <person name="Bhonagiri V."/>
            <person name="Nash W.E."/>
            <person name="Hallsworth-Pepin K."/>
            <person name="Wilson R.K."/>
            <person name="McClelland M."/>
            <person name="Forsythe S.J."/>
        </authorList>
    </citation>
    <scope>NUCLEOTIDE SEQUENCE [LARGE SCALE GENOMIC DNA]</scope>
    <source>
        <strain>ATCC BAA-894</strain>
    </source>
</reference>
<proteinExistence type="inferred from homology"/>
<keyword id="KW-0067">ATP-binding</keyword>
<keyword id="KW-0315">Glutamine amidotransferase</keyword>
<keyword id="KW-0332">GMP biosynthesis</keyword>
<keyword id="KW-0436">Ligase</keyword>
<keyword id="KW-0547">Nucleotide-binding</keyword>
<keyword id="KW-0658">Purine biosynthesis</keyword>
<keyword id="KW-1185">Reference proteome</keyword>
<protein>
    <recommendedName>
        <fullName evidence="1">GMP synthase [glutamine-hydrolyzing]</fullName>
        <ecNumber evidence="1">6.3.5.2</ecNumber>
    </recommendedName>
    <alternativeName>
        <fullName evidence="1">GMP synthetase</fullName>
    </alternativeName>
    <alternativeName>
        <fullName evidence="1">Glutamine amidotransferase</fullName>
    </alternativeName>
</protein>
<sequence>MTDNIHKHRILILDFGSQYTQLVARRVRELGVYCELWAWDVTEEQIRGFNPNGIILSGGPESTTEENSPRAPEYVFNAGVPVLGVCYGMQTMAMQLGGHVEGSNEREFGYAQVEVKTDSALVRGIEDALSADGNPLLDVWMSHGDKVTAIPSDFVTVASTETCPFAIMANEEKRFYGVQFHPEVTHTRQGLRMLERFVRDICECEALWTPAKIIDDAVERIRQQVGNDRVILGLSGGVDSSVTAMLLHRAIGDRLTCVFVDNGLLRLNEAEQVMDMFGDHFGLNIVHVPAEARFLDALAGIDEPEAKRKTIGRVFVEVFDEEALKLEDVKWLAQGTIYPDVIESAASATGKAHVIKSHHNVGGLPKEMKMGLVEPLKELFKDEVRKIGLELGLPYDMLYRHPFPGPGLGVRVLGEVKKEYCDLLRRADAIFIEELRRADLYDKVSQAFAVFLPVRSVGVMGDGRKYDWVVSLRAVETIDFMTAHWAHLPYDFLGRVSNRIINEINGISRVVYDISGKPPATIEWE</sequence>
<gene>
    <name evidence="1" type="primary">guaA</name>
    <name type="ordered locus">ESA_00755</name>
</gene>
<organism>
    <name type="scientific">Cronobacter sakazakii (strain ATCC BAA-894)</name>
    <name type="common">Enterobacter sakazakii</name>
    <dbReference type="NCBI Taxonomy" id="290339"/>
    <lineage>
        <taxon>Bacteria</taxon>
        <taxon>Pseudomonadati</taxon>
        <taxon>Pseudomonadota</taxon>
        <taxon>Gammaproteobacteria</taxon>
        <taxon>Enterobacterales</taxon>
        <taxon>Enterobacteriaceae</taxon>
        <taxon>Cronobacter</taxon>
    </lineage>
</organism>
<evidence type="ECO:0000255" key="1">
    <source>
        <dbReference type="HAMAP-Rule" id="MF_00344"/>
    </source>
</evidence>